<evidence type="ECO:0000269" key="1">
    <source>
    </source>
</evidence>
<evidence type="ECO:0000305" key="2"/>
<evidence type="ECO:0007744" key="3">
    <source>
    </source>
</evidence>
<protein>
    <recommendedName>
        <fullName>Adenine phosphoribosyltransferase 2</fullName>
        <shortName>APRT 2</shortName>
        <ecNumber>2.4.2.7</ecNumber>
    </recommendedName>
</protein>
<dbReference type="EC" id="2.4.2.7"/>
<dbReference type="EMBL" id="L14434">
    <property type="protein sequence ID" value="AAA62848.1"/>
    <property type="molecule type" value="Genomic_DNA"/>
</dbReference>
<dbReference type="EMBL" id="U33007">
    <property type="protein sequence ID" value="AAB64883.1"/>
    <property type="molecule type" value="Genomic_DNA"/>
</dbReference>
<dbReference type="EMBL" id="BK006938">
    <property type="protein sequence ID" value="DAA12278.1"/>
    <property type="molecule type" value="Genomic_DNA"/>
</dbReference>
<dbReference type="PIR" id="S69721">
    <property type="entry name" value="S69721"/>
</dbReference>
<dbReference type="RefSeq" id="NP_010729.3">
    <property type="nucleotide sequence ID" value="NM_001180749.3"/>
</dbReference>
<dbReference type="SMR" id="P36973"/>
<dbReference type="BioGRID" id="32497">
    <property type="interactions" value="117"/>
</dbReference>
<dbReference type="DIP" id="DIP-2056N"/>
<dbReference type="FunCoup" id="P36973">
    <property type="interactions" value="600"/>
</dbReference>
<dbReference type="IntAct" id="P36973">
    <property type="interactions" value="4"/>
</dbReference>
<dbReference type="STRING" id="4932.YDR441C"/>
<dbReference type="iPTMnet" id="P36973"/>
<dbReference type="PaxDb" id="4932-YDR441C"/>
<dbReference type="PeptideAtlas" id="P36973"/>
<dbReference type="EnsemblFungi" id="YDR441C_mRNA">
    <property type="protein sequence ID" value="YDR441C"/>
    <property type="gene ID" value="YDR441C"/>
</dbReference>
<dbReference type="GeneID" id="852051"/>
<dbReference type="KEGG" id="sce:YDR441C"/>
<dbReference type="AGR" id="SGD:S000002849"/>
<dbReference type="SGD" id="S000002849">
    <property type="gene designation" value="APT2"/>
</dbReference>
<dbReference type="VEuPathDB" id="FungiDB:YDR441C"/>
<dbReference type="eggNOG" id="KOG1712">
    <property type="taxonomic scope" value="Eukaryota"/>
</dbReference>
<dbReference type="GeneTree" id="ENSGT00940000176759"/>
<dbReference type="HOGENOM" id="CLU_063339_3_2_1"/>
<dbReference type="InParanoid" id="P36973"/>
<dbReference type="OMA" id="QAYDLEY"/>
<dbReference type="OrthoDB" id="363185at2759"/>
<dbReference type="BioCyc" id="YEAST:YDR441C-MONOMER"/>
<dbReference type="UniPathway" id="UPA00588">
    <property type="reaction ID" value="UER00646"/>
</dbReference>
<dbReference type="BioGRID-ORCS" id="852051">
    <property type="hits" value="7 hits in 10 CRISPR screens"/>
</dbReference>
<dbReference type="PRO" id="PR:P36973"/>
<dbReference type="Proteomes" id="UP000002311">
    <property type="component" value="Chromosome IV"/>
</dbReference>
<dbReference type="RNAct" id="P36973">
    <property type="molecule type" value="protein"/>
</dbReference>
<dbReference type="GO" id="GO:0005737">
    <property type="term" value="C:cytoplasm"/>
    <property type="evidence" value="ECO:0007005"/>
    <property type="project" value="SGD"/>
</dbReference>
<dbReference type="GO" id="GO:0002055">
    <property type="term" value="F:adenine binding"/>
    <property type="evidence" value="ECO:0000318"/>
    <property type="project" value="GO_Central"/>
</dbReference>
<dbReference type="GO" id="GO:0003999">
    <property type="term" value="F:adenine phosphoribosyltransferase activity"/>
    <property type="evidence" value="ECO:0000318"/>
    <property type="project" value="GO_Central"/>
</dbReference>
<dbReference type="GO" id="GO:0016208">
    <property type="term" value="F:AMP binding"/>
    <property type="evidence" value="ECO:0000318"/>
    <property type="project" value="GO_Central"/>
</dbReference>
<dbReference type="GO" id="GO:0006168">
    <property type="term" value="P:adenine salvage"/>
    <property type="evidence" value="ECO:0000318"/>
    <property type="project" value="GO_Central"/>
</dbReference>
<dbReference type="GO" id="GO:0044209">
    <property type="term" value="P:AMP salvage"/>
    <property type="evidence" value="ECO:0000318"/>
    <property type="project" value="GO_Central"/>
</dbReference>
<dbReference type="GO" id="GO:0006166">
    <property type="term" value="P:purine ribonucleoside salvage"/>
    <property type="evidence" value="ECO:0007669"/>
    <property type="project" value="UniProtKB-KW"/>
</dbReference>
<dbReference type="CDD" id="cd06223">
    <property type="entry name" value="PRTases_typeI"/>
    <property type="match status" value="1"/>
</dbReference>
<dbReference type="FunFam" id="3.40.50.2020:FF:000089">
    <property type="entry name" value="Adenine phosphoribosyltransferase 2"/>
    <property type="match status" value="1"/>
</dbReference>
<dbReference type="Gene3D" id="3.40.50.2020">
    <property type="match status" value="1"/>
</dbReference>
<dbReference type="InterPro" id="IPR000836">
    <property type="entry name" value="PRibTrfase_dom"/>
</dbReference>
<dbReference type="InterPro" id="IPR029057">
    <property type="entry name" value="PRTase-like"/>
</dbReference>
<dbReference type="InterPro" id="IPR050054">
    <property type="entry name" value="UPRTase/APRTase"/>
</dbReference>
<dbReference type="NCBIfam" id="NF002636">
    <property type="entry name" value="PRK02304.1-5"/>
    <property type="match status" value="1"/>
</dbReference>
<dbReference type="PANTHER" id="PTHR32315">
    <property type="entry name" value="ADENINE PHOSPHORIBOSYLTRANSFERASE"/>
    <property type="match status" value="1"/>
</dbReference>
<dbReference type="PANTHER" id="PTHR32315:SF3">
    <property type="entry name" value="ADENINE PHOSPHORIBOSYLTRANSFERASE"/>
    <property type="match status" value="1"/>
</dbReference>
<dbReference type="Pfam" id="PF00156">
    <property type="entry name" value="Pribosyltran"/>
    <property type="match status" value="1"/>
</dbReference>
<dbReference type="SUPFAM" id="SSF53271">
    <property type="entry name" value="PRTase-like"/>
    <property type="match status" value="1"/>
</dbReference>
<dbReference type="PROSITE" id="PS00103">
    <property type="entry name" value="PUR_PYR_PR_TRANSFER"/>
    <property type="match status" value="1"/>
</dbReference>
<gene>
    <name type="primary">APT2</name>
    <name type="ordered locus">YDR441C</name>
    <name type="ORF">D9461.27</name>
</gene>
<feature type="initiator methionine" description="Removed" evidence="3">
    <location>
        <position position="1"/>
    </location>
</feature>
<feature type="chain" id="PRO_0000149518" description="Adenine phosphoribosyltransferase 2">
    <location>
        <begin position="2"/>
        <end position="181"/>
    </location>
</feature>
<feature type="modified residue" description="N-acetylserine" evidence="3">
    <location>
        <position position="2"/>
    </location>
</feature>
<feature type="sequence conflict" description="In Ref. 1; AAA62848." evidence="2" ref="1">
    <original>G</original>
    <variation>A</variation>
    <location>
        <position position="57"/>
    </location>
</feature>
<organism>
    <name type="scientific">Saccharomyces cerevisiae (strain ATCC 204508 / S288c)</name>
    <name type="common">Baker's yeast</name>
    <dbReference type="NCBI Taxonomy" id="559292"/>
    <lineage>
        <taxon>Eukaryota</taxon>
        <taxon>Fungi</taxon>
        <taxon>Dikarya</taxon>
        <taxon>Ascomycota</taxon>
        <taxon>Saccharomycotina</taxon>
        <taxon>Saccharomycetes</taxon>
        <taxon>Saccharomycetales</taxon>
        <taxon>Saccharomycetaceae</taxon>
        <taxon>Saccharomyces</taxon>
    </lineage>
</organism>
<keyword id="KW-0007">Acetylation</keyword>
<keyword id="KW-0963">Cytoplasm</keyword>
<keyword id="KW-0328">Glycosyltransferase</keyword>
<keyword id="KW-0660">Purine salvage</keyword>
<keyword id="KW-1185">Reference proteome</keyword>
<keyword id="KW-0808">Transferase</keyword>
<reference key="1">
    <citation type="journal article" date="1994" name="Yeast">
        <title>A Saccharomyces cerevisiae gene encoding a potential adenine phosphoribosyltransferase.</title>
        <authorList>
            <person name="Yuryev A."/>
            <person name="Corden J.L."/>
        </authorList>
    </citation>
    <scope>NUCLEOTIDE SEQUENCE [GENOMIC DNA]</scope>
</reference>
<reference key="2">
    <citation type="journal article" date="1997" name="Nature">
        <title>The nucleotide sequence of Saccharomyces cerevisiae chromosome IV.</title>
        <authorList>
            <person name="Jacq C."/>
            <person name="Alt-Moerbe J."/>
            <person name="Andre B."/>
            <person name="Arnold W."/>
            <person name="Bahr A."/>
            <person name="Ballesta J.P.G."/>
            <person name="Bargues M."/>
            <person name="Baron L."/>
            <person name="Becker A."/>
            <person name="Biteau N."/>
            <person name="Bloecker H."/>
            <person name="Blugeon C."/>
            <person name="Boskovic J."/>
            <person name="Brandt P."/>
            <person name="Brueckner M."/>
            <person name="Buitrago M.J."/>
            <person name="Coster F."/>
            <person name="Delaveau T."/>
            <person name="del Rey F."/>
            <person name="Dujon B."/>
            <person name="Eide L.G."/>
            <person name="Garcia-Cantalejo J.M."/>
            <person name="Goffeau A."/>
            <person name="Gomez-Peris A."/>
            <person name="Granotier C."/>
            <person name="Hanemann V."/>
            <person name="Hankeln T."/>
            <person name="Hoheisel J.D."/>
            <person name="Jaeger W."/>
            <person name="Jimenez A."/>
            <person name="Jonniaux J.-L."/>
            <person name="Kraemer C."/>
            <person name="Kuester H."/>
            <person name="Laamanen P."/>
            <person name="Legros Y."/>
            <person name="Louis E.J."/>
            <person name="Moeller-Rieker S."/>
            <person name="Monnet A."/>
            <person name="Moro M."/>
            <person name="Mueller-Auer S."/>
            <person name="Nussbaumer B."/>
            <person name="Paricio N."/>
            <person name="Paulin L."/>
            <person name="Perea J."/>
            <person name="Perez-Alonso M."/>
            <person name="Perez-Ortin J.E."/>
            <person name="Pohl T.M."/>
            <person name="Prydz H."/>
            <person name="Purnelle B."/>
            <person name="Rasmussen S.W."/>
            <person name="Remacha M.A."/>
            <person name="Revuelta J.L."/>
            <person name="Rieger M."/>
            <person name="Salom D."/>
            <person name="Saluz H.P."/>
            <person name="Saiz J.E."/>
            <person name="Saren A.-M."/>
            <person name="Schaefer M."/>
            <person name="Scharfe M."/>
            <person name="Schmidt E.R."/>
            <person name="Schneider C."/>
            <person name="Scholler P."/>
            <person name="Schwarz S."/>
            <person name="Soler-Mira A."/>
            <person name="Urrestarazu L.A."/>
            <person name="Verhasselt P."/>
            <person name="Vissers S."/>
            <person name="Voet M."/>
            <person name="Volckaert G."/>
            <person name="Wagner G."/>
            <person name="Wambutt R."/>
            <person name="Wedler E."/>
            <person name="Wedler H."/>
            <person name="Woelfl S."/>
            <person name="Harris D.E."/>
            <person name="Bowman S."/>
            <person name="Brown D."/>
            <person name="Churcher C.M."/>
            <person name="Connor R."/>
            <person name="Dedman K."/>
            <person name="Gentles S."/>
            <person name="Hamlin N."/>
            <person name="Hunt S."/>
            <person name="Jones L."/>
            <person name="McDonald S."/>
            <person name="Murphy L.D."/>
            <person name="Niblett D."/>
            <person name="Odell C."/>
            <person name="Oliver K."/>
            <person name="Rajandream M.A."/>
            <person name="Richards C."/>
            <person name="Shore L."/>
            <person name="Walsh S.V."/>
            <person name="Barrell B.G."/>
            <person name="Dietrich F.S."/>
            <person name="Mulligan J.T."/>
            <person name="Allen E."/>
            <person name="Araujo R."/>
            <person name="Aviles E."/>
            <person name="Berno A."/>
            <person name="Carpenter J."/>
            <person name="Chen E."/>
            <person name="Cherry J.M."/>
            <person name="Chung E."/>
            <person name="Duncan M."/>
            <person name="Hunicke-Smith S."/>
            <person name="Hyman R.W."/>
            <person name="Komp C."/>
            <person name="Lashkari D."/>
            <person name="Lew H."/>
            <person name="Lin D."/>
            <person name="Mosedale D."/>
            <person name="Nakahara K."/>
            <person name="Namath A."/>
            <person name="Oefner P."/>
            <person name="Oh C."/>
            <person name="Petel F.X."/>
            <person name="Roberts D."/>
            <person name="Schramm S."/>
            <person name="Schroeder M."/>
            <person name="Shogren T."/>
            <person name="Shroff N."/>
            <person name="Winant A."/>
            <person name="Yelton M.A."/>
            <person name="Botstein D."/>
            <person name="Davis R.W."/>
            <person name="Johnston M."/>
            <person name="Andrews S."/>
            <person name="Brinkman R."/>
            <person name="Cooper J."/>
            <person name="Ding H."/>
            <person name="Du Z."/>
            <person name="Favello A."/>
            <person name="Fulton L."/>
            <person name="Gattung S."/>
            <person name="Greco T."/>
            <person name="Hallsworth K."/>
            <person name="Hawkins J."/>
            <person name="Hillier L.W."/>
            <person name="Jier M."/>
            <person name="Johnson D."/>
            <person name="Johnston L."/>
            <person name="Kirsten J."/>
            <person name="Kucaba T."/>
            <person name="Langston Y."/>
            <person name="Latreille P."/>
            <person name="Le T."/>
            <person name="Mardis E."/>
            <person name="Menezes S."/>
            <person name="Miller N."/>
            <person name="Nhan M."/>
            <person name="Pauley A."/>
            <person name="Peluso D."/>
            <person name="Rifkin L."/>
            <person name="Riles L."/>
            <person name="Taich A."/>
            <person name="Trevaskis E."/>
            <person name="Vignati D."/>
            <person name="Wilcox L."/>
            <person name="Wohldman P."/>
            <person name="Vaudin M."/>
            <person name="Wilson R."/>
            <person name="Waterston R."/>
            <person name="Albermann K."/>
            <person name="Hani J."/>
            <person name="Heumann K."/>
            <person name="Kleine K."/>
            <person name="Mewes H.-W."/>
            <person name="Zollner A."/>
            <person name="Zaccaria P."/>
        </authorList>
    </citation>
    <scope>NUCLEOTIDE SEQUENCE [LARGE SCALE GENOMIC DNA]</scope>
    <source>
        <strain>ATCC 204508 / S288c</strain>
    </source>
</reference>
<reference key="3">
    <citation type="journal article" date="2014" name="G3 (Bethesda)">
        <title>The reference genome sequence of Saccharomyces cerevisiae: Then and now.</title>
        <authorList>
            <person name="Engel S.R."/>
            <person name="Dietrich F.S."/>
            <person name="Fisk D.G."/>
            <person name="Binkley G."/>
            <person name="Balakrishnan R."/>
            <person name="Costanzo M.C."/>
            <person name="Dwight S.S."/>
            <person name="Hitz B.C."/>
            <person name="Karra K."/>
            <person name="Nash R.S."/>
            <person name="Weng S."/>
            <person name="Wong E.D."/>
            <person name="Lloyd P."/>
            <person name="Skrzypek M.S."/>
            <person name="Miyasato S.R."/>
            <person name="Simison M."/>
            <person name="Cherry J.M."/>
        </authorList>
    </citation>
    <scope>GENOME REANNOTATION</scope>
    <source>
        <strain>ATCC 204508 / S288c</strain>
    </source>
</reference>
<reference key="4">
    <citation type="journal article" date="1999" name="J. Bacteriol.">
        <title>APT1, but not APT2, codes for a functional adenine phosphoribosyltransferase in Saccharomyces cerevisiae.</title>
        <authorList>
            <person name="Alfonzo J.D."/>
            <person name="Crother T.R."/>
            <person name="Guetsova M.L."/>
            <person name="Daignan-Fornier B."/>
            <person name="Taylor M.W."/>
        </authorList>
    </citation>
    <scope>POSSIBLE LACK OF CATALYTIC ACTIVITY</scope>
</reference>
<reference key="5">
    <citation type="journal article" date="2003" name="Nature">
        <title>Global analysis of protein expression in yeast.</title>
        <authorList>
            <person name="Ghaemmaghami S."/>
            <person name="Huh W.-K."/>
            <person name="Bower K."/>
            <person name="Howson R.W."/>
            <person name="Belle A."/>
            <person name="Dephoure N."/>
            <person name="O'Shea E.K."/>
            <person name="Weissman J.S."/>
        </authorList>
    </citation>
    <scope>LEVEL OF PROTEIN EXPRESSION [LARGE SCALE ANALYSIS]</scope>
</reference>
<reference key="6">
    <citation type="journal article" date="2012" name="Proc. Natl. Acad. Sci. U.S.A.">
        <title>N-terminal acetylome analyses and functional insights of the N-terminal acetyltransferase NatB.</title>
        <authorList>
            <person name="Van Damme P."/>
            <person name="Lasa M."/>
            <person name="Polevoda B."/>
            <person name="Gazquez C."/>
            <person name="Elosegui-Artola A."/>
            <person name="Kim D.S."/>
            <person name="De Juan-Pardo E."/>
            <person name="Demeyer K."/>
            <person name="Hole K."/>
            <person name="Larrea E."/>
            <person name="Timmerman E."/>
            <person name="Prieto J."/>
            <person name="Arnesen T."/>
            <person name="Sherman F."/>
            <person name="Gevaert K."/>
            <person name="Aldabe R."/>
        </authorList>
    </citation>
    <scope>ACETYLATION [LARGE SCALE ANALYSIS] AT SER-2</scope>
    <scope>CLEAVAGE OF INITIATOR METHIONINE [LARGE SCALE ANALYSIS]</scope>
    <scope>IDENTIFICATION BY MASS SPECTROMETRY [LARGE SCALE ANALYSIS]</scope>
</reference>
<proteinExistence type="evidence at protein level"/>
<sequence>MSISESYAKEIKTAFRQFTDFPIEGEQFEDFLPIIGNPTLFQKLVHTFKTHLEEKFGKEKIDFIAGIEARGLLFGPSLALALGVGFVPIRRVGKLPGECASITFTKLDHEEIFEMQVEAIPFDSNVVVVDDVLATGGTAYAAGDLIRQVGAHILEYDFVLVLDSLHGEEKLSAPIFSILHS</sequence>
<comment type="function">
    <text>Catalyzes a salvage reaction resulting in the formation of AMP, that is energically less costly than de novo synthesis. May lack catalytic activity.</text>
</comment>
<comment type="catalytic activity">
    <reaction>
        <text>AMP + diphosphate = 5-phospho-alpha-D-ribose 1-diphosphate + adenine</text>
        <dbReference type="Rhea" id="RHEA:16609"/>
        <dbReference type="ChEBI" id="CHEBI:16708"/>
        <dbReference type="ChEBI" id="CHEBI:33019"/>
        <dbReference type="ChEBI" id="CHEBI:58017"/>
        <dbReference type="ChEBI" id="CHEBI:456215"/>
        <dbReference type="EC" id="2.4.2.7"/>
    </reaction>
</comment>
<comment type="pathway">
    <text>Purine metabolism; AMP biosynthesis via salvage pathway; AMP from adenine: step 1/1.</text>
</comment>
<comment type="interaction">
    <interactant intactId="EBI-2738">
        <id>P36973</id>
    </interactant>
    <interactant intactId="EBI-2733">
        <id>P49435</id>
        <label>APT1</label>
    </interactant>
    <organismsDiffer>false</organismsDiffer>
    <experiments>2</experiments>
</comment>
<comment type="subcellular location">
    <subcellularLocation>
        <location>Cytoplasm</location>
    </subcellularLocation>
</comment>
<comment type="miscellaneous">
    <text evidence="1">Present with 937 molecules/cell in log phase SD medium.</text>
</comment>
<comment type="similarity">
    <text evidence="2">Belongs to the purine/pyrimidine phosphoribosyltransferase family.</text>
</comment>
<accession>P36973</accession>
<accession>Q04090</accession>
<name>APT2_YEAST</name>